<protein>
    <recommendedName>
        <fullName evidence="1">Adenylosuccinate synthetase</fullName>
        <shortName evidence="1">AMPSase</shortName>
        <shortName evidence="1">AdSS</shortName>
        <ecNumber evidence="1">6.3.4.4</ecNumber>
    </recommendedName>
    <alternativeName>
        <fullName evidence="1">IMP--aspartate ligase</fullName>
    </alternativeName>
</protein>
<reference key="1">
    <citation type="journal article" date="2006" name="Nat. Biotechnol.">
        <title>Genome sequence of the ubiquitous hydrocarbon-degrading marine bacterium Alcanivorax borkumensis.</title>
        <authorList>
            <person name="Schneiker S."/>
            <person name="Martins dos Santos V.A.P."/>
            <person name="Bartels D."/>
            <person name="Bekel T."/>
            <person name="Brecht M."/>
            <person name="Buhrmester J."/>
            <person name="Chernikova T.N."/>
            <person name="Denaro R."/>
            <person name="Ferrer M."/>
            <person name="Gertler C."/>
            <person name="Goesmann A."/>
            <person name="Golyshina O.V."/>
            <person name="Kaminski F."/>
            <person name="Khachane A.N."/>
            <person name="Lang S."/>
            <person name="Linke B."/>
            <person name="McHardy A.C."/>
            <person name="Meyer F."/>
            <person name="Nechitaylo T."/>
            <person name="Puehler A."/>
            <person name="Regenhardt D."/>
            <person name="Rupp O."/>
            <person name="Sabirova J.S."/>
            <person name="Selbitschka W."/>
            <person name="Yakimov M.M."/>
            <person name="Timmis K.N."/>
            <person name="Vorhoelter F.-J."/>
            <person name="Weidner S."/>
            <person name="Kaiser O."/>
            <person name="Golyshin P.N."/>
        </authorList>
    </citation>
    <scope>NUCLEOTIDE SEQUENCE [LARGE SCALE GENOMIC DNA]</scope>
    <source>
        <strain>ATCC 700651 / DSM 11573 / NCIMB 13689 / SK2</strain>
    </source>
</reference>
<comment type="function">
    <text evidence="1">Plays an important role in the de novo pathway of purine nucleotide biosynthesis. Catalyzes the first committed step in the biosynthesis of AMP from IMP.</text>
</comment>
<comment type="catalytic activity">
    <reaction evidence="1">
        <text>IMP + L-aspartate + GTP = N(6)-(1,2-dicarboxyethyl)-AMP + GDP + phosphate + 2 H(+)</text>
        <dbReference type="Rhea" id="RHEA:15753"/>
        <dbReference type="ChEBI" id="CHEBI:15378"/>
        <dbReference type="ChEBI" id="CHEBI:29991"/>
        <dbReference type="ChEBI" id="CHEBI:37565"/>
        <dbReference type="ChEBI" id="CHEBI:43474"/>
        <dbReference type="ChEBI" id="CHEBI:57567"/>
        <dbReference type="ChEBI" id="CHEBI:58053"/>
        <dbReference type="ChEBI" id="CHEBI:58189"/>
        <dbReference type="EC" id="6.3.4.4"/>
    </reaction>
</comment>
<comment type="cofactor">
    <cofactor evidence="1">
        <name>Mg(2+)</name>
        <dbReference type="ChEBI" id="CHEBI:18420"/>
    </cofactor>
    <text evidence="1">Binds 1 Mg(2+) ion per subunit.</text>
</comment>
<comment type="pathway">
    <text evidence="1">Purine metabolism; AMP biosynthesis via de novo pathway; AMP from IMP: step 1/2.</text>
</comment>
<comment type="subunit">
    <text evidence="1">Homodimer.</text>
</comment>
<comment type="subcellular location">
    <subcellularLocation>
        <location evidence="1">Cytoplasm</location>
    </subcellularLocation>
</comment>
<comment type="similarity">
    <text evidence="1">Belongs to the adenylosuccinate synthetase family.</text>
</comment>
<dbReference type="EC" id="6.3.4.4" evidence="1"/>
<dbReference type="EMBL" id="AM286690">
    <property type="protein sequence ID" value="CAL17645.1"/>
    <property type="molecule type" value="Genomic_DNA"/>
</dbReference>
<dbReference type="RefSeq" id="WP_011589474.1">
    <property type="nucleotide sequence ID" value="NC_008260.1"/>
</dbReference>
<dbReference type="SMR" id="Q0VMF3"/>
<dbReference type="STRING" id="393595.ABO_2197"/>
<dbReference type="KEGG" id="abo:ABO_2197"/>
<dbReference type="eggNOG" id="COG0104">
    <property type="taxonomic scope" value="Bacteria"/>
</dbReference>
<dbReference type="HOGENOM" id="CLU_029848_0_0_6"/>
<dbReference type="OrthoDB" id="9807553at2"/>
<dbReference type="UniPathway" id="UPA00075">
    <property type="reaction ID" value="UER00335"/>
</dbReference>
<dbReference type="Proteomes" id="UP000008871">
    <property type="component" value="Chromosome"/>
</dbReference>
<dbReference type="GO" id="GO:0005737">
    <property type="term" value="C:cytoplasm"/>
    <property type="evidence" value="ECO:0007669"/>
    <property type="project" value="UniProtKB-SubCell"/>
</dbReference>
<dbReference type="GO" id="GO:0004019">
    <property type="term" value="F:adenylosuccinate synthase activity"/>
    <property type="evidence" value="ECO:0007669"/>
    <property type="project" value="UniProtKB-UniRule"/>
</dbReference>
<dbReference type="GO" id="GO:0005525">
    <property type="term" value="F:GTP binding"/>
    <property type="evidence" value="ECO:0007669"/>
    <property type="project" value="UniProtKB-UniRule"/>
</dbReference>
<dbReference type="GO" id="GO:0000287">
    <property type="term" value="F:magnesium ion binding"/>
    <property type="evidence" value="ECO:0007669"/>
    <property type="project" value="UniProtKB-UniRule"/>
</dbReference>
<dbReference type="GO" id="GO:0044208">
    <property type="term" value="P:'de novo' AMP biosynthetic process"/>
    <property type="evidence" value="ECO:0007669"/>
    <property type="project" value="UniProtKB-UniRule"/>
</dbReference>
<dbReference type="GO" id="GO:0046040">
    <property type="term" value="P:IMP metabolic process"/>
    <property type="evidence" value="ECO:0007669"/>
    <property type="project" value="TreeGrafter"/>
</dbReference>
<dbReference type="CDD" id="cd03108">
    <property type="entry name" value="AdSS"/>
    <property type="match status" value="1"/>
</dbReference>
<dbReference type="FunFam" id="1.10.300.10:FF:000001">
    <property type="entry name" value="Adenylosuccinate synthetase"/>
    <property type="match status" value="1"/>
</dbReference>
<dbReference type="FunFam" id="3.90.170.10:FF:000001">
    <property type="entry name" value="Adenylosuccinate synthetase"/>
    <property type="match status" value="1"/>
</dbReference>
<dbReference type="Gene3D" id="3.40.440.10">
    <property type="entry name" value="Adenylosuccinate Synthetase, subunit A, domain 1"/>
    <property type="match status" value="1"/>
</dbReference>
<dbReference type="Gene3D" id="1.10.300.10">
    <property type="entry name" value="Adenylosuccinate Synthetase, subunit A, domain 2"/>
    <property type="match status" value="1"/>
</dbReference>
<dbReference type="Gene3D" id="3.90.170.10">
    <property type="entry name" value="Adenylosuccinate Synthetase, subunit A, domain 3"/>
    <property type="match status" value="1"/>
</dbReference>
<dbReference type="HAMAP" id="MF_00011">
    <property type="entry name" value="Adenylosucc_synth"/>
    <property type="match status" value="1"/>
</dbReference>
<dbReference type="InterPro" id="IPR018220">
    <property type="entry name" value="Adenylosuccin_syn_GTP-bd"/>
</dbReference>
<dbReference type="InterPro" id="IPR033128">
    <property type="entry name" value="Adenylosuccin_syn_Lys_AS"/>
</dbReference>
<dbReference type="InterPro" id="IPR042109">
    <property type="entry name" value="Adenylosuccinate_synth_dom1"/>
</dbReference>
<dbReference type="InterPro" id="IPR042110">
    <property type="entry name" value="Adenylosuccinate_synth_dom2"/>
</dbReference>
<dbReference type="InterPro" id="IPR042111">
    <property type="entry name" value="Adenylosuccinate_synth_dom3"/>
</dbReference>
<dbReference type="InterPro" id="IPR001114">
    <property type="entry name" value="Adenylosuccinate_synthetase"/>
</dbReference>
<dbReference type="InterPro" id="IPR027417">
    <property type="entry name" value="P-loop_NTPase"/>
</dbReference>
<dbReference type="NCBIfam" id="NF002223">
    <property type="entry name" value="PRK01117.1"/>
    <property type="match status" value="1"/>
</dbReference>
<dbReference type="NCBIfam" id="TIGR00184">
    <property type="entry name" value="purA"/>
    <property type="match status" value="1"/>
</dbReference>
<dbReference type="PANTHER" id="PTHR11846">
    <property type="entry name" value="ADENYLOSUCCINATE SYNTHETASE"/>
    <property type="match status" value="1"/>
</dbReference>
<dbReference type="PANTHER" id="PTHR11846:SF0">
    <property type="entry name" value="ADENYLOSUCCINATE SYNTHETASE"/>
    <property type="match status" value="1"/>
</dbReference>
<dbReference type="Pfam" id="PF00709">
    <property type="entry name" value="Adenylsucc_synt"/>
    <property type="match status" value="1"/>
</dbReference>
<dbReference type="SMART" id="SM00788">
    <property type="entry name" value="Adenylsucc_synt"/>
    <property type="match status" value="1"/>
</dbReference>
<dbReference type="SUPFAM" id="SSF52540">
    <property type="entry name" value="P-loop containing nucleoside triphosphate hydrolases"/>
    <property type="match status" value="1"/>
</dbReference>
<dbReference type="PROSITE" id="PS01266">
    <property type="entry name" value="ADENYLOSUCCIN_SYN_1"/>
    <property type="match status" value="1"/>
</dbReference>
<dbReference type="PROSITE" id="PS00513">
    <property type="entry name" value="ADENYLOSUCCIN_SYN_2"/>
    <property type="match status" value="1"/>
</dbReference>
<evidence type="ECO:0000255" key="1">
    <source>
        <dbReference type="HAMAP-Rule" id="MF_00011"/>
    </source>
</evidence>
<organism>
    <name type="scientific">Alcanivorax borkumensis (strain ATCC 700651 / DSM 11573 / NCIMB 13689 / SK2)</name>
    <dbReference type="NCBI Taxonomy" id="393595"/>
    <lineage>
        <taxon>Bacteria</taxon>
        <taxon>Pseudomonadati</taxon>
        <taxon>Pseudomonadota</taxon>
        <taxon>Gammaproteobacteria</taxon>
        <taxon>Oceanospirillales</taxon>
        <taxon>Alcanivoracaceae</taxon>
        <taxon>Alcanivorax</taxon>
    </lineage>
</organism>
<feature type="chain" id="PRO_1000000771" description="Adenylosuccinate synthetase">
    <location>
        <begin position="1"/>
        <end position="430"/>
    </location>
</feature>
<feature type="active site" description="Proton acceptor" evidence="1">
    <location>
        <position position="14"/>
    </location>
</feature>
<feature type="active site" description="Proton donor" evidence="1">
    <location>
        <position position="42"/>
    </location>
</feature>
<feature type="binding site" evidence="1">
    <location>
        <begin position="13"/>
        <end position="19"/>
    </location>
    <ligand>
        <name>GTP</name>
        <dbReference type="ChEBI" id="CHEBI:37565"/>
    </ligand>
</feature>
<feature type="binding site" description="in other chain" evidence="1">
    <location>
        <begin position="14"/>
        <end position="17"/>
    </location>
    <ligand>
        <name>IMP</name>
        <dbReference type="ChEBI" id="CHEBI:58053"/>
        <note>ligand shared between dimeric partners</note>
    </ligand>
</feature>
<feature type="binding site" evidence="1">
    <location>
        <position position="14"/>
    </location>
    <ligand>
        <name>Mg(2+)</name>
        <dbReference type="ChEBI" id="CHEBI:18420"/>
    </ligand>
</feature>
<feature type="binding site" description="in other chain" evidence="1">
    <location>
        <begin position="39"/>
        <end position="42"/>
    </location>
    <ligand>
        <name>IMP</name>
        <dbReference type="ChEBI" id="CHEBI:58053"/>
        <note>ligand shared between dimeric partners</note>
    </ligand>
</feature>
<feature type="binding site" evidence="1">
    <location>
        <begin position="41"/>
        <end position="43"/>
    </location>
    <ligand>
        <name>GTP</name>
        <dbReference type="ChEBI" id="CHEBI:37565"/>
    </ligand>
</feature>
<feature type="binding site" evidence="1">
    <location>
        <position position="41"/>
    </location>
    <ligand>
        <name>Mg(2+)</name>
        <dbReference type="ChEBI" id="CHEBI:18420"/>
    </ligand>
</feature>
<feature type="binding site" description="in other chain" evidence="1">
    <location>
        <position position="130"/>
    </location>
    <ligand>
        <name>IMP</name>
        <dbReference type="ChEBI" id="CHEBI:58053"/>
        <note>ligand shared between dimeric partners</note>
    </ligand>
</feature>
<feature type="binding site" evidence="1">
    <location>
        <position position="144"/>
    </location>
    <ligand>
        <name>IMP</name>
        <dbReference type="ChEBI" id="CHEBI:58053"/>
        <note>ligand shared between dimeric partners</note>
    </ligand>
</feature>
<feature type="binding site" description="in other chain" evidence="1">
    <location>
        <position position="225"/>
    </location>
    <ligand>
        <name>IMP</name>
        <dbReference type="ChEBI" id="CHEBI:58053"/>
        <note>ligand shared between dimeric partners</note>
    </ligand>
</feature>
<feature type="binding site" description="in other chain" evidence="1">
    <location>
        <position position="240"/>
    </location>
    <ligand>
        <name>IMP</name>
        <dbReference type="ChEBI" id="CHEBI:58053"/>
        <note>ligand shared between dimeric partners</note>
    </ligand>
</feature>
<feature type="binding site" evidence="1">
    <location>
        <begin position="300"/>
        <end position="306"/>
    </location>
    <ligand>
        <name>substrate</name>
    </ligand>
</feature>
<feature type="binding site" description="in other chain" evidence="1">
    <location>
        <position position="304"/>
    </location>
    <ligand>
        <name>IMP</name>
        <dbReference type="ChEBI" id="CHEBI:58053"/>
        <note>ligand shared between dimeric partners</note>
    </ligand>
</feature>
<feature type="binding site" evidence="1">
    <location>
        <position position="306"/>
    </location>
    <ligand>
        <name>GTP</name>
        <dbReference type="ChEBI" id="CHEBI:37565"/>
    </ligand>
</feature>
<feature type="binding site" evidence="1">
    <location>
        <begin position="332"/>
        <end position="334"/>
    </location>
    <ligand>
        <name>GTP</name>
        <dbReference type="ChEBI" id="CHEBI:37565"/>
    </ligand>
</feature>
<feature type="binding site" evidence="1">
    <location>
        <begin position="414"/>
        <end position="416"/>
    </location>
    <ligand>
        <name>GTP</name>
        <dbReference type="ChEBI" id="CHEBI:37565"/>
    </ligand>
</feature>
<proteinExistence type="inferred from homology"/>
<sequence>MGKNVVILGTQWGDEGKGKIVDLLTDQASLVARFQGGHNAGHTLVIDGKKTVLHLIPSGILREDVQCLIGNGVVLSLEALLKEIGGLEDQGVPVRDRLRLSASCPLILPVHVALDQAREAARGNKKIGTTGRGIGPAYEDKVARRGLRLGDVYQRELFAAKLGEVMDYHNFVLRSYYNAEPVDFQKTLDDTLQLGEDVRSMVTDVTAVLHGARERGENIMFEGAQGTLLDIDHGTYPYVTSSNTTAGGTATGTGFGPLYLDYVLGITKAYTTRVGSGPFPTELFDENGRYLAEKGHEFGSTTGRARRCGWFDAVALKRSIQINSITGLCLTKLDVLDGLEEINICVGYQDAAGNSLECAWDADSYEEVKPVYESLPGWSESTLGVKSEDDLPPNAKAYLKRIEAITGAPIDIISTGPDRVETIIKRHPFS</sequence>
<accession>Q0VMF3</accession>
<keyword id="KW-0963">Cytoplasm</keyword>
<keyword id="KW-0342">GTP-binding</keyword>
<keyword id="KW-0436">Ligase</keyword>
<keyword id="KW-0460">Magnesium</keyword>
<keyword id="KW-0479">Metal-binding</keyword>
<keyword id="KW-0547">Nucleotide-binding</keyword>
<keyword id="KW-0658">Purine biosynthesis</keyword>
<keyword id="KW-1185">Reference proteome</keyword>
<gene>
    <name evidence="1" type="primary">purA</name>
    <name type="ordered locus">ABO_2197</name>
</gene>
<name>PURA_ALCBS</name>